<name>APF6_GIBF5</name>
<gene>
    <name evidence="5" type="primary">apf6</name>
    <name type="ORF">FFUJ_00008</name>
</gene>
<evidence type="ECO:0000250" key="1">
    <source>
        <dbReference type="UniProtKB" id="O04385"/>
    </source>
</evidence>
<evidence type="ECO:0000255" key="2">
    <source>
        <dbReference type="PROSITE-ProRule" id="PRU01020"/>
    </source>
</evidence>
<evidence type="ECO:0000269" key="3">
    <source>
    </source>
</evidence>
<evidence type="ECO:0000269" key="4">
    <source>
    </source>
</evidence>
<evidence type="ECO:0000303" key="5">
    <source>
    </source>
</evidence>
<evidence type="ECO:0000305" key="6">
    <source>
    </source>
</evidence>
<organism>
    <name type="scientific">Gibberella fujikuroi (strain CBS 195.34 / IMI 58289 / NRRL A-6831)</name>
    <name type="common">Bakanae and foot rot disease fungus</name>
    <name type="synonym">Fusarium fujikuroi</name>
    <dbReference type="NCBI Taxonomy" id="1279085"/>
    <lineage>
        <taxon>Eukaryota</taxon>
        <taxon>Fungi</taxon>
        <taxon>Dikarya</taxon>
        <taxon>Ascomycota</taxon>
        <taxon>Pezizomycotina</taxon>
        <taxon>Sordariomycetes</taxon>
        <taxon>Hypocreomycetidae</taxon>
        <taxon>Hypocreales</taxon>
        <taxon>Nectriaceae</taxon>
        <taxon>Fusarium</taxon>
        <taxon>Fusarium fujikuroi species complex</taxon>
    </lineage>
</organism>
<reference key="1">
    <citation type="journal article" date="2013" name="PLoS Pathog.">
        <title>Deciphering the cryptic genome: genome-wide analyses of the rice pathogen Fusarium fujikuroi reveal complex regulation of secondary metabolism and novel metabolites.</title>
        <authorList>
            <person name="Wiemann P."/>
            <person name="Sieber C.M.K."/>
            <person name="von Bargen K.W."/>
            <person name="Studt L."/>
            <person name="Niehaus E.-M."/>
            <person name="Espino J.J."/>
            <person name="Huss K."/>
            <person name="Michielse C.B."/>
            <person name="Albermann S."/>
            <person name="Wagner D."/>
            <person name="Bergner S.V."/>
            <person name="Connolly L.R."/>
            <person name="Fischer A."/>
            <person name="Reuter G."/>
            <person name="Kleigrewe K."/>
            <person name="Bald T."/>
            <person name="Wingfield B.D."/>
            <person name="Ophir R."/>
            <person name="Freeman S."/>
            <person name="Hippler M."/>
            <person name="Smith K.M."/>
            <person name="Brown D.W."/>
            <person name="Proctor R.H."/>
            <person name="Muensterkoetter M."/>
            <person name="Freitag M."/>
            <person name="Humpf H.-U."/>
            <person name="Gueldener U."/>
            <person name="Tudzynski B."/>
        </authorList>
    </citation>
    <scope>NUCLEOTIDE SEQUENCE [LARGE SCALE GENOMIC DNA]</scope>
    <source>
        <strain>CBS 195.34 / IMI 58289 / NRRL A-6831</strain>
    </source>
</reference>
<reference key="2">
    <citation type="journal article" date="2013" name="J. Nat. Prod.">
        <title>Structure elucidation and antimalarial activity of apicidin F: an apicidin-like compound produced by Fusarium fujikuroi.</title>
        <authorList>
            <person name="von Bargen K.W."/>
            <person name="Niehaus E.M."/>
            <person name="Bergander K."/>
            <person name="Brun R."/>
            <person name="Tudzynski B."/>
            <person name="Humpf H.U."/>
        </authorList>
    </citation>
    <scope>FUNCTION</scope>
    <scope>BIOTECHNOLOGY</scope>
</reference>
<reference key="3">
    <citation type="journal article" date="2014" name="PLoS ONE">
        <title>Apicidin F: characterization and genetic manipulation of a new secondary metabolite gene cluster in the rice pathogen Fusarium fujikuroi.</title>
        <authorList>
            <person name="Niehaus E.M."/>
            <person name="Janevska S."/>
            <person name="von Bargen K.W."/>
            <person name="Sieber C.M."/>
            <person name="Harrer H."/>
            <person name="Humpf H.U."/>
            <person name="Tudzynski B."/>
        </authorList>
    </citation>
    <scope>FUNCTION</scope>
    <scope>INDUCTION</scope>
    <scope>DISRUPTION PHENOTYPE</scope>
</reference>
<dbReference type="EC" id="2.1.1.-" evidence="6"/>
<dbReference type="EMBL" id="HF679023">
    <property type="protein sequence ID" value="CCT63356.1"/>
    <property type="molecule type" value="Genomic_DNA"/>
</dbReference>
<dbReference type="SMR" id="S0DLP1"/>
<dbReference type="STRING" id="1279085.S0DLP1"/>
<dbReference type="EnsemblFungi" id="CCT63356">
    <property type="protein sequence ID" value="CCT63356"/>
    <property type="gene ID" value="FFUJ_00008"/>
</dbReference>
<dbReference type="VEuPathDB" id="FungiDB:FFUJ_00008"/>
<dbReference type="HOGENOM" id="CLU_005533_5_0_1"/>
<dbReference type="BioCyc" id="MetaCyc:MONOMER-19329"/>
<dbReference type="Proteomes" id="UP000016800">
    <property type="component" value="Chromosome 1"/>
</dbReference>
<dbReference type="GO" id="GO:0008171">
    <property type="term" value="F:O-methyltransferase activity"/>
    <property type="evidence" value="ECO:0007669"/>
    <property type="project" value="InterPro"/>
</dbReference>
<dbReference type="GO" id="GO:0046983">
    <property type="term" value="F:protein dimerization activity"/>
    <property type="evidence" value="ECO:0007669"/>
    <property type="project" value="InterPro"/>
</dbReference>
<dbReference type="GO" id="GO:0032259">
    <property type="term" value="P:methylation"/>
    <property type="evidence" value="ECO:0007669"/>
    <property type="project" value="UniProtKB-KW"/>
</dbReference>
<dbReference type="GO" id="GO:0044550">
    <property type="term" value="P:secondary metabolite biosynthetic process"/>
    <property type="evidence" value="ECO:0007669"/>
    <property type="project" value="UniProtKB-ARBA"/>
</dbReference>
<dbReference type="Gene3D" id="3.40.50.150">
    <property type="entry name" value="Vaccinia Virus protein VP39"/>
    <property type="match status" value="1"/>
</dbReference>
<dbReference type="Gene3D" id="1.10.10.10">
    <property type="entry name" value="Winged helix-like DNA-binding domain superfamily/Winged helix DNA-binding domain"/>
    <property type="match status" value="1"/>
</dbReference>
<dbReference type="InterPro" id="IPR016461">
    <property type="entry name" value="COMT-like"/>
</dbReference>
<dbReference type="InterPro" id="IPR001077">
    <property type="entry name" value="O_MeTrfase_dom"/>
</dbReference>
<dbReference type="InterPro" id="IPR012967">
    <property type="entry name" value="Plant_O-MeTrfase_dimerisation"/>
</dbReference>
<dbReference type="InterPro" id="IPR029063">
    <property type="entry name" value="SAM-dependent_MTases_sf"/>
</dbReference>
<dbReference type="InterPro" id="IPR036388">
    <property type="entry name" value="WH-like_DNA-bd_sf"/>
</dbReference>
<dbReference type="InterPro" id="IPR036390">
    <property type="entry name" value="WH_DNA-bd_sf"/>
</dbReference>
<dbReference type="PANTHER" id="PTHR43712:SF2">
    <property type="entry name" value="O-METHYLTRANSFERASE CICE"/>
    <property type="match status" value="1"/>
</dbReference>
<dbReference type="PANTHER" id="PTHR43712">
    <property type="entry name" value="PUTATIVE (AFU_ORTHOLOGUE AFUA_4G14580)-RELATED"/>
    <property type="match status" value="1"/>
</dbReference>
<dbReference type="Pfam" id="PF08100">
    <property type="entry name" value="Dimerisation"/>
    <property type="match status" value="1"/>
</dbReference>
<dbReference type="Pfam" id="PF00891">
    <property type="entry name" value="Methyltransf_2"/>
    <property type="match status" value="1"/>
</dbReference>
<dbReference type="PIRSF" id="PIRSF005739">
    <property type="entry name" value="O-mtase"/>
    <property type="match status" value="1"/>
</dbReference>
<dbReference type="SUPFAM" id="SSF53335">
    <property type="entry name" value="S-adenosyl-L-methionine-dependent methyltransferases"/>
    <property type="match status" value="1"/>
</dbReference>
<dbReference type="SUPFAM" id="SSF46785">
    <property type="entry name" value="Winged helix' DNA-binding domain"/>
    <property type="match status" value="1"/>
</dbReference>
<dbReference type="PROSITE" id="PS51683">
    <property type="entry name" value="SAM_OMT_II"/>
    <property type="match status" value="1"/>
</dbReference>
<comment type="function">
    <text evidence="3 4">O-methyltransferase; part of the gene cluster that mediates the biosynthesis of the cyclic tetrapeptide apicidin F (APF) (PubMed:25058475). The non-ribosomal peptide synthetase apf1 incorporates four different amino acids to produce apicidin F: L-phenylalanine, D-pipecolic acid (D-pip), N-methoxy-L-tryptophan and L-2-aminooctanedioic acid (PubMed:25058475). L-Phenylalanine is the only proteinogenic amino acid directly used by apf1 (PubMed:24195442, PubMed:25058475). The 3 other apf1 substrates are non-proteinogenic and have to be modified by other enzymes of the cluster (PubMed:25058475). Lysine is converted to delta-1-pyrroline-5-carboxylate (P5C) which is reduced to L-pipecolic acid (L-pip) by apf3 (PubMed:25058475). L-pip is epimerized to D-pip, probably by apf1 activity, prior to incorporation (PubMed:25058475). L-Tryptophan is N-oxidyzed by one of the cytochrome P450 monooxygenases (apf7 or apf8), and further methylated at the hydroxy group by the O-methyltransferase apf6 to yield N-methoxy-L-tryptophan (PubMed:25058475). The synthesis of the fourth apf1 substrate is more complex (PubMed:25058475). The fatty acid synthase apf5 is involved in the synthesis of the octanoic acid backbone of L-2-aminooctanedioic acid by fixing one acetyl-CoA unit and three malonyl-CoA units (PubMed:25058475). Then one of the cytochrome P450 monooxygenases (apf7 or apf8) may oxidize this backbone to 2-oxooctanoic acid (PubMed:25058475). The aminotransferase apf4 is predicted to catalyze the exchange of the keto group with an amino group (PubMed:25058475). The next step would be the oxidation of 2-aminooctanoic acid by one of the cytochrome P450 monooxygenases (apf7 or apf8). The last step is the oxidation of 2-amino-8-hydroxyoctanoic acid to 2-aminooctanedioic acid is catalyzed by the FAD-dependent monooxygenase apf9 (PubMed:25058475).</text>
</comment>
<comment type="pathway">
    <text evidence="4">Secondary metabolite biosynthesis.</text>
</comment>
<comment type="induction">
    <text evidence="4">Expression is positively regulated by the apicidin F cluster-specific transcription factor apf2 that binds to the eight-base-pair motif 5'-TGACGTGA-3' called the 'Api-box' that is found in all promoters of the apicidin F cluster except in the promoter region of apf2 itself (PubMed:25058475).</text>
</comment>
<comment type="disruption phenotype">
    <text evidence="4">Leads to the loss of apicidin F production (PubMed:25058475).</text>
</comment>
<comment type="biotechnology">
    <text evidence="3">Apicidin F, like the other known apicidins, is a cyclic tetrapeptides with anti-malarial properties via histone deacetylase inhibitory activity (PubMed:24195442).</text>
</comment>
<comment type="similarity">
    <text evidence="2">Belongs to the class I-like SAM-binding methyltransferase superfamily. Cation-independent O-methyltransferase family.</text>
</comment>
<proteinExistence type="evidence at protein level"/>
<keyword id="KW-0489">Methyltransferase</keyword>
<keyword id="KW-1185">Reference proteome</keyword>
<keyword id="KW-0949">S-adenosyl-L-methionine</keyword>
<keyword id="KW-0808">Transferase</keyword>
<feature type="chain" id="PRO_0000437161" description="O-methyltransferase apf6">
    <location>
        <begin position="1"/>
        <end position="351"/>
    </location>
</feature>
<feature type="active site" description="Proton acceptor" evidence="2">
    <location>
        <position position="299"/>
    </location>
</feature>
<feature type="binding site" evidence="1">
    <location>
        <begin position="231"/>
        <end position="232"/>
    </location>
    <ligand>
        <name>S-adenosyl-L-methionine</name>
        <dbReference type="ChEBI" id="CHEBI:59789"/>
    </ligand>
</feature>
<feature type="binding site" evidence="1">
    <location>
        <begin position="279"/>
        <end position="280"/>
    </location>
    <ligand>
        <name>S-adenosyl-L-methionine</name>
        <dbReference type="ChEBI" id="CHEBI:59789"/>
    </ligand>
</feature>
<feature type="binding site" evidence="1">
    <location>
        <position position="295"/>
    </location>
    <ligand>
        <name>S-adenosyl-L-methionine</name>
        <dbReference type="ChEBI" id="CHEBI:59789"/>
    </ligand>
</feature>
<accession>S0DLP1</accession>
<sequence length="351" mass="39863">MASPSTDRLHLIEYLQDPGNPDGESRERLIEACQDVIASLERPIETARKQAFLTLDHAVIRSAIKLNLFKALDKEDRPYSTQELALATTPQCNHVLLSRLLRYLATRPLRLVIETSAGFWQRTARGSVFAQDSFKSGCSMYFDACGPAFQALPTWICTPDHERLHSPFQVAYPGQGSFFKRLQEDDSMLQTFQCWMETVSRHQFCAQETIDFNEWIPDGTSDSDVVFVDVGGGTGDQAIALGYKRIGLPGRIINQDLLPISQEAEEMLRSHNIERITYNFFDEQPLKGACVYHYRQIFHDWPDADCERILRRAKDSMTASSTLLIDEVVLPETGAHWMNDHKYNGVACYST</sequence>
<protein>
    <recommendedName>
        <fullName evidence="5">O-methyltransferase apf6</fullName>
        <ecNumber evidence="6">2.1.1.-</ecNumber>
    </recommendedName>
    <alternativeName>
        <fullName evidence="5">Apicidin F synthesis protein 6</fullName>
    </alternativeName>
</protein>